<feature type="chain" id="PRO_0000147999" description="Phosphoglucosamine mutase">
    <location>
        <begin position="1"/>
        <end position="446"/>
    </location>
</feature>
<feature type="active site" description="Phosphoserine intermediate" evidence="1">
    <location>
        <position position="103"/>
    </location>
</feature>
<feature type="binding site" description="via phosphate group" evidence="1">
    <location>
        <position position="103"/>
    </location>
    <ligand>
        <name>Mg(2+)</name>
        <dbReference type="ChEBI" id="CHEBI:18420"/>
    </ligand>
</feature>
<feature type="binding site" evidence="1">
    <location>
        <position position="242"/>
    </location>
    <ligand>
        <name>Mg(2+)</name>
        <dbReference type="ChEBI" id="CHEBI:18420"/>
    </ligand>
</feature>
<feature type="binding site" evidence="1">
    <location>
        <position position="244"/>
    </location>
    <ligand>
        <name>Mg(2+)</name>
        <dbReference type="ChEBI" id="CHEBI:18420"/>
    </ligand>
</feature>
<feature type="binding site" evidence="1">
    <location>
        <position position="246"/>
    </location>
    <ligand>
        <name>Mg(2+)</name>
        <dbReference type="ChEBI" id="CHEBI:18420"/>
    </ligand>
</feature>
<feature type="modified residue" description="Phosphoserine" evidence="1">
    <location>
        <position position="103"/>
    </location>
</feature>
<organism>
    <name type="scientific">Vibrio vulnificus (strain CMCP6)</name>
    <dbReference type="NCBI Taxonomy" id="216895"/>
    <lineage>
        <taxon>Bacteria</taxon>
        <taxon>Pseudomonadati</taxon>
        <taxon>Pseudomonadota</taxon>
        <taxon>Gammaproteobacteria</taxon>
        <taxon>Vibrionales</taxon>
        <taxon>Vibrionaceae</taxon>
        <taxon>Vibrio</taxon>
    </lineage>
</organism>
<protein>
    <recommendedName>
        <fullName evidence="1">Phosphoglucosamine mutase</fullName>
        <ecNumber evidence="1">5.4.2.10</ecNumber>
    </recommendedName>
</protein>
<evidence type="ECO:0000255" key="1">
    <source>
        <dbReference type="HAMAP-Rule" id="MF_01554"/>
    </source>
</evidence>
<gene>
    <name evidence="1" type="primary">glmM</name>
    <name type="ordered locus">VV1_1692</name>
</gene>
<keyword id="KW-0413">Isomerase</keyword>
<keyword id="KW-0460">Magnesium</keyword>
<keyword id="KW-0479">Metal-binding</keyword>
<keyword id="KW-0597">Phosphoprotein</keyword>
<name>GLMM_VIBVU</name>
<reference key="1">
    <citation type="submission" date="2002-12" db="EMBL/GenBank/DDBJ databases">
        <title>Complete genome sequence of Vibrio vulnificus CMCP6.</title>
        <authorList>
            <person name="Rhee J.H."/>
            <person name="Kim S.Y."/>
            <person name="Chung S.S."/>
            <person name="Kim J.J."/>
            <person name="Moon Y.H."/>
            <person name="Jeong H."/>
            <person name="Choy H.E."/>
        </authorList>
    </citation>
    <scope>NUCLEOTIDE SEQUENCE [LARGE SCALE GENOMIC DNA]</scope>
    <source>
        <strain>CMCP6</strain>
    </source>
</reference>
<sequence length="446" mass="47696">MSDKRRYFGTDGVRGKVGQYPITPDFVLKLGWAAGRVLAKQGTKKVIIGKDTRISGYMLESALEAGLAAAGLKATFTGPMPTPAVAYLTQTFRAEAGIVISASHNPYYDNGIKFFSSEGTKLPDDIELAIEAELDKEIECVESAELGKATRLNDAAGRYIEFCKSTFPSELSLAKLKIVVDCANGATYHIAPNVFTELGADVIAMGVTPNGTNINHEVGATDVRALQQRVVEEQADLGLAFDGDGDRIIMVDHLGNKVDGDQIAYIIARDALRRGELKGGVVGTLMTNLGMENGLKQLGIPFVRAAVGDRYVMEKLLEKGWKIGAENSGHVILLDKVTTGDAIVAALQVLASVVGSELSLNELSKGMTLYPQVLENVRFAGQGNPLEAEAVKKTVEDVEADLGSKGRVLLRKSGTEPLIRVMVEGEDGELVQNSALKIAQAVKDNC</sequence>
<comment type="function">
    <text evidence="1">Catalyzes the conversion of glucosamine-6-phosphate to glucosamine-1-phosphate.</text>
</comment>
<comment type="catalytic activity">
    <reaction evidence="1">
        <text>alpha-D-glucosamine 1-phosphate = D-glucosamine 6-phosphate</text>
        <dbReference type="Rhea" id="RHEA:23424"/>
        <dbReference type="ChEBI" id="CHEBI:58516"/>
        <dbReference type="ChEBI" id="CHEBI:58725"/>
        <dbReference type="EC" id="5.4.2.10"/>
    </reaction>
</comment>
<comment type="cofactor">
    <cofactor evidence="1">
        <name>Mg(2+)</name>
        <dbReference type="ChEBI" id="CHEBI:18420"/>
    </cofactor>
    <text evidence="1">Binds 1 Mg(2+) ion per subunit.</text>
</comment>
<comment type="PTM">
    <text evidence="1">Activated by phosphorylation.</text>
</comment>
<comment type="similarity">
    <text evidence="1">Belongs to the phosphohexose mutase family.</text>
</comment>
<dbReference type="EC" id="5.4.2.10" evidence="1"/>
<dbReference type="EMBL" id="AE016795">
    <property type="protein sequence ID" value="AAO10108.1"/>
    <property type="molecule type" value="Genomic_DNA"/>
</dbReference>
<dbReference type="RefSeq" id="WP_011079612.1">
    <property type="nucleotide sequence ID" value="NC_004459.3"/>
</dbReference>
<dbReference type="SMR" id="Q8DBW4"/>
<dbReference type="KEGG" id="vvu:VV1_1692"/>
<dbReference type="HOGENOM" id="CLU_016950_7_0_6"/>
<dbReference type="Proteomes" id="UP000002275">
    <property type="component" value="Chromosome 1"/>
</dbReference>
<dbReference type="GO" id="GO:0005829">
    <property type="term" value="C:cytosol"/>
    <property type="evidence" value="ECO:0007669"/>
    <property type="project" value="TreeGrafter"/>
</dbReference>
<dbReference type="GO" id="GO:0000287">
    <property type="term" value="F:magnesium ion binding"/>
    <property type="evidence" value="ECO:0007669"/>
    <property type="project" value="UniProtKB-UniRule"/>
</dbReference>
<dbReference type="GO" id="GO:0008966">
    <property type="term" value="F:phosphoglucosamine mutase activity"/>
    <property type="evidence" value="ECO:0007669"/>
    <property type="project" value="UniProtKB-UniRule"/>
</dbReference>
<dbReference type="GO" id="GO:0004615">
    <property type="term" value="F:phosphomannomutase activity"/>
    <property type="evidence" value="ECO:0007669"/>
    <property type="project" value="TreeGrafter"/>
</dbReference>
<dbReference type="GO" id="GO:0005975">
    <property type="term" value="P:carbohydrate metabolic process"/>
    <property type="evidence" value="ECO:0007669"/>
    <property type="project" value="InterPro"/>
</dbReference>
<dbReference type="GO" id="GO:0009252">
    <property type="term" value="P:peptidoglycan biosynthetic process"/>
    <property type="evidence" value="ECO:0007669"/>
    <property type="project" value="TreeGrafter"/>
</dbReference>
<dbReference type="GO" id="GO:0006048">
    <property type="term" value="P:UDP-N-acetylglucosamine biosynthetic process"/>
    <property type="evidence" value="ECO:0007669"/>
    <property type="project" value="TreeGrafter"/>
</dbReference>
<dbReference type="CDD" id="cd05802">
    <property type="entry name" value="GlmM"/>
    <property type="match status" value="1"/>
</dbReference>
<dbReference type="FunFam" id="3.30.310.50:FF:000001">
    <property type="entry name" value="Phosphoglucosamine mutase"/>
    <property type="match status" value="1"/>
</dbReference>
<dbReference type="FunFam" id="3.40.120.10:FF:000001">
    <property type="entry name" value="Phosphoglucosamine mutase"/>
    <property type="match status" value="1"/>
</dbReference>
<dbReference type="FunFam" id="3.40.120.10:FF:000003">
    <property type="entry name" value="Phosphoglucosamine mutase"/>
    <property type="match status" value="1"/>
</dbReference>
<dbReference type="Gene3D" id="3.40.120.10">
    <property type="entry name" value="Alpha-D-Glucose-1,6-Bisphosphate, subunit A, domain 3"/>
    <property type="match status" value="3"/>
</dbReference>
<dbReference type="Gene3D" id="3.30.310.50">
    <property type="entry name" value="Alpha-D-phosphohexomutase, C-terminal domain"/>
    <property type="match status" value="1"/>
</dbReference>
<dbReference type="HAMAP" id="MF_01554_B">
    <property type="entry name" value="GlmM_B"/>
    <property type="match status" value="1"/>
</dbReference>
<dbReference type="InterPro" id="IPR005844">
    <property type="entry name" value="A-D-PHexomutase_a/b/a-I"/>
</dbReference>
<dbReference type="InterPro" id="IPR016055">
    <property type="entry name" value="A-D-PHexomutase_a/b/a-I/II/III"/>
</dbReference>
<dbReference type="InterPro" id="IPR005845">
    <property type="entry name" value="A-D-PHexomutase_a/b/a-II"/>
</dbReference>
<dbReference type="InterPro" id="IPR005846">
    <property type="entry name" value="A-D-PHexomutase_a/b/a-III"/>
</dbReference>
<dbReference type="InterPro" id="IPR005843">
    <property type="entry name" value="A-D-PHexomutase_C"/>
</dbReference>
<dbReference type="InterPro" id="IPR036900">
    <property type="entry name" value="A-D-PHexomutase_C_sf"/>
</dbReference>
<dbReference type="InterPro" id="IPR016066">
    <property type="entry name" value="A-D-PHexomutase_CS"/>
</dbReference>
<dbReference type="InterPro" id="IPR005841">
    <property type="entry name" value="Alpha-D-phosphohexomutase_SF"/>
</dbReference>
<dbReference type="InterPro" id="IPR006352">
    <property type="entry name" value="GlmM_bact"/>
</dbReference>
<dbReference type="InterPro" id="IPR050060">
    <property type="entry name" value="Phosphoglucosamine_mutase"/>
</dbReference>
<dbReference type="NCBIfam" id="TIGR01455">
    <property type="entry name" value="glmM"/>
    <property type="match status" value="1"/>
</dbReference>
<dbReference type="NCBIfam" id="NF008139">
    <property type="entry name" value="PRK10887.1"/>
    <property type="match status" value="1"/>
</dbReference>
<dbReference type="PANTHER" id="PTHR42946:SF1">
    <property type="entry name" value="PHOSPHOGLUCOMUTASE (ALPHA-D-GLUCOSE-1,6-BISPHOSPHATE-DEPENDENT)"/>
    <property type="match status" value="1"/>
</dbReference>
<dbReference type="PANTHER" id="PTHR42946">
    <property type="entry name" value="PHOSPHOHEXOSE MUTASE"/>
    <property type="match status" value="1"/>
</dbReference>
<dbReference type="Pfam" id="PF02878">
    <property type="entry name" value="PGM_PMM_I"/>
    <property type="match status" value="1"/>
</dbReference>
<dbReference type="Pfam" id="PF02879">
    <property type="entry name" value="PGM_PMM_II"/>
    <property type="match status" value="1"/>
</dbReference>
<dbReference type="Pfam" id="PF02880">
    <property type="entry name" value="PGM_PMM_III"/>
    <property type="match status" value="1"/>
</dbReference>
<dbReference type="Pfam" id="PF00408">
    <property type="entry name" value="PGM_PMM_IV"/>
    <property type="match status" value="1"/>
</dbReference>
<dbReference type="PRINTS" id="PR00509">
    <property type="entry name" value="PGMPMM"/>
</dbReference>
<dbReference type="SUPFAM" id="SSF55957">
    <property type="entry name" value="Phosphoglucomutase, C-terminal domain"/>
    <property type="match status" value="1"/>
</dbReference>
<dbReference type="SUPFAM" id="SSF53738">
    <property type="entry name" value="Phosphoglucomutase, first 3 domains"/>
    <property type="match status" value="3"/>
</dbReference>
<dbReference type="PROSITE" id="PS00710">
    <property type="entry name" value="PGM_PMM"/>
    <property type="match status" value="1"/>
</dbReference>
<accession>Q8DBW4</accession>
<proteinExistence type="inferred from homology"/>